<proteinExistence type="inferred from homology"/>
<keyword id="KW-0030">Aminoacyl-tRNA synthetase</keyword>
<keyword id="KW-0067">ATP-binding</keyword>
<keyword id="KW-0150">Chloroplast</keyword>
<keyword id="KW-0436">Ligase</keyword>
<keyword id="KW-0479">Metal-binding</keyword>
<keyword id="KW-0496">Mitochondrion</keyword>
<keyword id="KW-0547">Nucleotide-binding</keyword>
<keyword id="KW-0934">Plastid</keyword>
<keyword id="KW-0648">Protein biosynthesis</keyword>
<keyword id="KW-1185">Reference proteome</keyword>
<keyword id="KW-0694">RNA-binding</keyword>
<keyword id="KW-0809">Transit peptide</keyword>
<keyword id="KW-0820">tRNA-binding</keyword>
<keyword id="KW-0862">Zinc</keyword>
<gene>
    <name type="ORF">OsI_22356</name>
</gene>
<evidence type="ECO:0000255" key="1">
    <source>
        <dbReference type="HAMAP-Rule" id="MF_03134"/>
    </source>
</evidence>
<name>SYAP_ORYSI</name>
<protein>
    <recommendedName>
        <fullName evidence="1">Alanine--tRNA ligase, chloroplastic/mitochondrial</fullName>
        <ecNumber evidence="1">6.1.1.7</ecNumber>
    </recommendedName>
    <alternativeName>
        <fullName evidence="1">Alanyl-tRNA synthetase</fullName>
        <shortName evidence="1">AlaRS</shortName>
    </alternativeName>
</protein>
<dbReference type="EC" id="6.1.1.7" evidence="1"/>
<dbReference type="EMBL" id="CM000131">
    <property type="protein sequence ID" value="EEC80314.1"/>
    <property type="molecule type" value="Genomic_DNA"/>
</dbReference>
<dbReference type="SMR" id="B8B4H5"/>
<dbReference type="STRING" id="39946.B8B4H5"/>
<dbReference type="EnsemblPlants" id="BGIOSGA022618-TA">
    <property type="protein sequence ID" value="BGIOSGA022618-PA"/>
    <property type="gene ID" value="BGIOSGA022618"/>
</dbReference>
<dbReference type="Gramene" id="BGIOSGA022618-TA">
    <property type="protein sequence ID" value="BGIOSGA022618-PA"/>
    <property type="gene ID" value="BGIOSGA022618"/>
</dbReference>
<dbReference type="HOGENOM" id="CLU_004485_1_1_1"/>
<dbReference type="OMA" id="GFDMEME"/>
<dbReference type="Proteomes" id="UP000007015">
    <property type="component" value="Chromosome 6"/>
</dbReference>
<dbReference type="GO" id="GO:0009507">
    <property type="term" value="C:chloroplast"/>
    <property type="evidence" value="ECO:0007669"/>
    <property type="project" value="UniProtKB-SubCell"/>
</dbReference>
<dbReference type="GO" id="GO:0005829">
    <property type="term" value="C:cytosol"/>
    <property type="evidence" value="ECO:0007669"/>
    <property type="project" value="TreeGrafter"/>
</dbReference>
<dbReference type="GO" id="GO:0005739">
    <property type="term" value="C:mitochondrion"/>
    <property type="evidence" value="ECO:0007669"/>
    <property type="project" value="UniProtKB-SubCell"/>
</dbReference>
<dbReference type="GO" id="GO:0004813">
    <property type="term" value="F:alanine-tRNA ligase activity"/>
    <property type="evidence" value="ECO:0007669"/>
    <property type="project" value="UniProtKB-UniRule"/>
</dbReference>
<dbReference type="GO" id="GO:0002161">
    <property type="term" value="F:aminoacyl-tRNA deacylase activity"/>
    <property type="evidence" value="ECO:0007669"/>
    <property type="project" value="TreeGrafter"/>
</dbReference>
<dbReference type="GO" id="GO:0005524">
    <property type="term" value="F:ATP binding"/>
    <property type="evidence" value="ECO:0007669"/>
    <property type="project" value="UniProtKB-UniRule"/>
</dbReference>
<dbReference type="GO" id="GO:0000049">
    <property type="term" value="F:tRNA binding"/>
    <property type="evidence" value="ECO:0007669"/>
    <property type="project" value="UniProtKB-KW"/>
</dbReference>
<dbReference type="GO" id="GO:0008270">
    <property type="term" value="F:zinc ion binding"/>
    <property type="evidence" value="ECO:0007669"/>
    <property type="project" value="UniProtKB-UniRule"/>
</dbReference>
<dbReference type="GO" id="GO:0006419">
    <property type="term" value="P:alanyl-tRNA aminoacylation"/>
    <property type="evidence" value="ECO:0007669"/>
    <property type="project" value="UniProtKB-UniRule"/>
</dbReference>
<dbReference type="CDD" id="cd00673">
    <property type="entry name" value="AlaRS_core"/>
    <property type="match status" value="1"/>
</dbReference>
<dbReference type="FunFam" id="3.10.310.40:FF:000001">
    <property type="entry name" value="Alanine--tRNA ligase"/>
    <property type="match status" value="1"/>
</dbReference>
<dbReference type="FunFam" id="3.30.54.20:FF:000001">
    <property type="entry name" value="Alanine--tRNA ligase"/>
    <property type="match status" value="1"/>
</dbReference>
<dbReference type="FunFam" id="3.30.930.10:FF:000004">
    <property type="entry name" value="Alanine--tRNA ligase"/>
    <property type="match status" value="1"/>
</dbReference>
<dbReference type="FunFam" id="3.30.980.10:FF:000004">
    <property type="entry name" value="Alanine--tRNA ligase, cytoplasmic"/>
    <property type="match status" value="1"/>
</dbReference>
<dbReference type="FunFam" id="2.40.30.130:FF:000007">
    <property type="entry name" value="Probable alanine--tRNA ligase, chloroplastic"/>
    <property type="match status" value="1"/>
</dbReference>
<dbReference type="Gene3D" id="2.40.30.130">
    <property type="match status" value="1"/>
</dbReference>
<dbReference type="Gene3D" id="3.10.310.40">
    <property type="match status" value="1"/>
</dbReference>
<dbReference type="Gene3D" id="3.30.54.20">
    <property type="match status" value="1"/>
</dbReference>
<dbReference type="Gene3D" id="6.10.250.550">
    <property type="match status" value="1"/>
</dbReference>
<dbReference type="Gene3D" id="3.30.930.10">
    <property type="entry name" value="Bira Bifunctional Protein, Domain 2"/>
    <property type="match status" value="1"/>
</dbReference>
<dbReference type="Gene3D" id="3.30.980.10">
    <property type="entry name" value="Threonyl-trna Synthetase, Chain A, domain 2"/>
    <property type="match status" value="1"/>
</dbReference>
<dbReference type="HAMAP" id="MF_00036_B">
    <property type="entry name" value="Ala_tRNA_synth_B"/>
    <property type="match status" value="1"/>
</dbReference>
<dbReference type="HAMAP" id="MF_03134">
    <property type="entry name" value="Ala_tRNA_synth_plantC"/>
    <property type="match status" value="1"/>
</dbReference>
<dbReference type="InterPro" id="IPR045864">
    <property type="entry name" value="aa-tRNA-synth_II/BPL/LPL"/>
</dbReference>
<dbReference type="InterPro" id="IPR002318">
    <property type="entry name" value="Ala-tRNA-lgiase_IIc"/>
</dbReference>
<dbReference type="InterPro" id="IPR018162">
    <property type="entry name" value="Ala-tRNA-ligase_IIc_anticod-bd"/>
</dbReference>
<dbReference type="InterPro" id="IPR018165">
    <property type="entry name" value="Ala-tRNA-synth_IIc_core"/>
</dbReference>
<dbReference type="InterPro" id="IPR018164">
    <property type="entry name" value="Ala-tRNA-synth_IIc_N"/>
</dbReference>
<dbReference type="InterPro" id="IPR050058">
    <property type="entry name" value="Ala-tRNA_ligase"/>
</dbReference>
<dbReference type="InterPro" id="IPR023033">
    <property type="entry name" value="Ala_tRNA_ligase_euk/bac"/>
</dbReference>
<dbReference type="InterPro" id="IPR027522">
    <property type="entry name" value="Ala_tRNA_synth_plant"/>
</dbReference>
<dbReference type="InterPro" id="IPR003156">
    <property type="entry name" value="DHHA1_dom"/>
</dbReference>
<dbReference type="InterPro" id="IPR018163">
    <property type="entry name" value="Thr/Ala-tRNA-synth_IIc_edit"/>
</dbReference>
<dbReference type="InterPro" id="IPR009000">
    <property type="entry name" value="Transl_B-barrel_sf"/>
</dbReference>
<dbReference type="InterPro" id="IPR012947">
    <property type="entry name" value="tRNA_SAD"/>
</dbReference>
<dbReference type="NCBIfam" id="TIGR00344">
    <property type="entry name" value="alaS"/>
    <property type="match status" value="1"/>
</dbReference>
<dbReference type="PANTHER" id="PTHR11777:SF9">
    <property type="entry name" value="ALANINE--TRNA LIGASE, CYTOPLASMIC"/>
    <property type="match status" value="1"/>
</dbReference>
<dbReference type="PANTHER" id="PTHR11777">
    <property type="entry name" value="ALANYL-TRNA SYNTHETASE"/>
    <property type="match status" value="1"/>
</dbReference>
<dbReference type="Pfam" id="PF02272">
    <property type="entry name" value="DHHA1"/>
    <property type="match status" value="1"/>
</dbReference>
<dbReference type="Pfam" id="PF01411">
    <property type="entry name" value="tRNA-synt_2c"/>
    <property type="match status" value="1"/>
</dbReference>
<dbReference type="Pfam" id="PF07973">
    <property type="entry name" value="tRNA_SAD"/>
    <property type="match status" value="1"/>
</dbReference>
<dbReference type="PRINTS" id="PR00980">
    <property type="entry name" value="TRNASYNTHALA"/>
</dbReference>
<dbReference type="SMART" id="SM00863">
    <property type="entry name" value="tRNA_SAD"/>
    <property type="match status" value="1"/>
</dbReference>
<dbReference type="SUPFAM" id="SSF55681">
    <property type="entry name" value="Class II aaRS and biotin synthetases"/>
    <property type="match status" value="1"/>
</dbReference>
<dbReference type="SUPFAM" id="SSF101353">
    <property type="entry name" value="Putative anticodon-binding domain of alanyl-tRNA synthetase (AlaRS)"/>
    <property type="match status" value="1"/>
</dbReference>
<dbReference type="SUPFAM" id="SSF55186">
    <property type="entry name" value="ThrRS/AlaRS common domain"/>
    <property type="match status" value="1"/>
</dbReference>
<dbReference type="SUPFAM" id="SSF50447">
    <property type="entry name" value="Translation proteins"/>
    <property type="match status" value="1"/>
</dbReference>
<dbReference type="PROSITE" id="PS50860">
    <property type="entry name" value="AA_TRNA_LIGASE_II_ALA"/>
    <property type="match status" value="1"/>
</dbReference>
<accession>B8B4H5</accession>
<comment type="function">
    <text evidence="1">Catalyzes the attachment of alanine to tRNA(Ala) in a two-step reaction: alanine is first activated by ATP to form Ala-AMP and then transferred to the acceptor end of tRNA(Ala). Also edits incorrectly charged tRNA(Ala) via its editing domain.</text>
</comment>
<comment type="catalytic activity">
    <reaction evidence="1">
        <text>tRNA(Ala) + L-alanine + ATP = L-alanyl-tRNA(Ala) + AMP + diphosphate</text>
        <dbReference type="Rhea" id="RHEA:12540"/>
        <dbReference type="Rhea" id="RHEA-COMP:9657"/>
        <dbReference type="Rhea" id="RHEA-COMP:9923"/>
        <dbReference type="ChEBI" id="CHEBI:30616"/>
        <dbReference type="ChEBI" id="CHEBI:33019"/>
        <dbReference type="ChEBI" id="CHEBI:57972"/>
        <dbReference type="ChEBI" id="CHEBI:78442"/>
        <dbReference type="ChEBI" id="CHEBI:78497"/>
        <dbReference type="ChEBI" id="CHEBI:456215"/>
        <dbReference type="EC" id="6.1.1.7"/>
    </reaction>
</comment>
<comment type="cofactor">
    <cofactor evidence="1">
        <name>Zn(2+)</name>
        <dbReference type="ChEBI" id="CHEBI:29105"/>
    </cofactor>
    <text evidence="1">Binds 1 zinc ion per subunit.</text>
</comment>
<comment type="subunit">
    <text evidence="1">Monomer.</text>
</comment>
<comment type="subcellular location">
    <subcellularLocation>
        <location evidence="1">Plastid</location>
        <location evidence="1">Chloroplast</location>
    </subcellularLocation>
    <subcellularLocation>
        <location evidence="1">Mitochondrion</location>
    </subcellularLocation>
</comment>
<comment type="domain">
    <text evidence="1">Consists of three domains; the N-terminal catalytic domain, the editing domain and the C-terminal C-Ala domain. The editing domain removes incorrectly charged amino acids, while the C-Ala domain, along with tRNA(Ala), serves as a bridge to cooperatively bring together the editing and aminoacylation centers thus stimulating deacylation of misacylated tRNAs.</text>
</comment>
<comment type="similarity">
    <text evidence="1">Belongs to the class-II aminoacyl-tRNA synthetase family.</text>
</comment>
<reference key="1">
    <citation type="journal article" date="2005" name="PLoS Biol.">
        <title>The genomes of Oryza sativa: a history of duplications.</title>
        <authorList>
            <person name="Yu J."/>
            <person name="Wang J."/>
            <person name="Lin W."/>
            <person name="Li S."/>
            <person name="Li H."/>
            <person name="Zhou J."/>
            <person name="Ni P."/>
            <person name="Dong W."/>
            <person name="Hu S."/>
            <person name="Zeng C."/>
            <person name="Zhang J."/>
            <person name="Zhang Y."/>
            <person name="Li R."/>
            <person name="Xu Z."/>
            <person name="Li S."/>
            <person name="Li X."/>
            <person name="Zheng H."/>
            <person name="Cong L."/>
            <person name="Lin L."/>
            <person name="Yin J."/>
            <person name="Geng J."/>
            <person name="Li G."/>
            <person name="Shi J."/>
            <person name="Liu J."/>
            <person name="Lv H."/>
            <person name="Li J."/>
            <person name="Wang J."/>
            <person name="Deng Y."/>
            <person name="Ran L."/>
            <person name="Shi X."/>
            <person name="Wang X."/>
            <person name="Wu Q."/>
            <person name="Li C."/>
            <person name="Ren X."/>
            <person name="Wang J."/>
            <person name="Wang X."/>
            <person name="Li D."/>
            <person name="Liu D."/>
            <person name="Zhang X."/>
            <person name="Ji Z."/>
            <person name="Zhao W."/>
            <person name="Sun Y."/>
            <person name="Zhang Z."/>
            <person name="Bao J."/>
            <person name="Han Y."/>
            <person name="Dong L."/>
            <person name="Ji J."/>
            <person name="Chen P."/>
            <person name="Wu S."/>
            <person name="Liu J."/>
            <person name="Xiao Y."/>
            <person name="Bu D."/>
            <person name="Tan J."/>
            <person name="Yang L."/>
            <person name="Ye C."/>
            <person name="Zhang J."/>
            <person name="Xu J."/>
            <person name="Zhou Y."/>
            <person name="Yu Y."/>
            <person name="Zhang B."/>
            <person name="Zhuang S."/>
            <person name="Wei H."/>
            <person name="Liu B."/>
            <person name="Lei M."/>
            <person name="Yu H."/>
            <person name="Li Y."/>
            <person name="Xu H."/>
            <person name="Wei S."/>
            <person name="He X."/>
            <person name="Fang L."/>
            <person name="Zhang Z."/>
            <person name="Zhang Y."/>
            <person name="Huang X."/>
            <person name="Su Z."/>
            <person name="Tong W."/>
            <person name="Li J."/>
            <person name="Tong Z."/>
            <person name="Li S."/>
            <person name="Ye J."/>
            <person name="Wang L."/>
            <person name="Fang L."/>
            <person name="Lei T."/>
            <person name="Chen C.-S."/>
            <person name="Chen H.-C."/>
            <person name="Xu Z."/>
            <person name="Li H."/>
            <person name="Huang H."/>
            <person name="Zhang F."/>
            <person name="Xu H."/>
            <person name="Li N."/>
            <person name="Zhao C."/>
            <person name="Li S."/>
            <person name="Dong L."/>
            <person name="Huang Y."/>
            <person name="Li L."/>
            <person name="Xi Y."/>
            <person name="Qi Q."/>
            <person name="Li W."/>
            <person name="Zhang B."/>
            <person name="Hu W."/>
            <person name="Zhang Y."/>
            <person name="Tian X."/>
            <person name="Jiao Y."/>
            <person name="Liang X."/>
            <person name="Jin J."/>
            <person name="Gao L."/>
            <person name="Zheng W."/>
            <person name="Hao B."/>
            <person name="Liu S.-M."/>
            <person name="Wang W."/>
            <person name="Yuan L."/>
            <person name="Cao M."/>
            <person name="McDermott J."/>
            <person name="Samudrala R."/>
            <person name="Wang J."/>
            <person name="Wong G.K.-S."/>
            <person name="Yang H."/>
        </authorList>
    </citation>
    <scope>NUCLEOTIDE SEQUENCE [LARGE SCALE GENOMIC DNA]</scope>
    <source>
        <strain>cv. 93-11</strain>
    </source>
</reference>
<organism>
    <name type="scientific">Oryza sativa subsp. indica</name>
    <name type="common">Rice</name>
    <dbReference type="NCBI Taxonomy" id="39946"/>
    <lineage>
        <taxon>Eukaryota</taxon>
        <taxon>Viridiplantae</taxon>
        <taxon>Streptophyta</taxon>
        <taxon>Embryophyta</taxon>
        <taxon>Tracheophyta</taxon>
        <taxon>Spermatophyta</taxon>
        <taxon>Magnoliopsida</taxon>
        <taxon>Liliopsida</taxon>
        <taxon>Poales</taxon>
        <taxon>Poaceae</taxon>
        <taxon>BOP clade</taxon>
        <taxon>Oryzoideae</taxon>
        <taxon>Oryzeae</taxon>
        <taxon>Oryzinae</taxon>
        <taxon>Oryza</taxon>
        <taxon>Oryza sativa</taxon>
    </lineage>
</organism>
<sequence>MEAAALLSPTATSRSPLPLLSTAPAAHRLHVLLPLSGRRRRLCLRSSPRPRGSLGCAGDCVVRSMGSSRERGVLVKTSSSSASVESATQEVGAASSGEWSGDAIRRRFLDFYAARGHKILPSSSLVPDDPTVFLTIAGMLQFKPIFLGKEPRRVPCATTSQKCIRTNDIENVGRTSRHQTFFEMLGNFSFGDYFKKEAITWAWELTTKEFGLPPERLWISVFQDDDEAFSIWHNEVGVPKERIKRLGEDDNFWTSGATGPCGPCSEIYYDFYPERGSSDADLGDDSRFIEFYNLVFMQYNKKDDGSLEPLKQKNIDTGMGLERMARILQKVPNNYETDLIFPIIEKAASMALVSYTTADDAMKTNLKIIGDHMRAVVYLISDGVIPSNIGRGYVVRRLIRRVVRTGRLIGIRGDGHGNSEGAFLPSLAEVAISLSTEIDPDVESRRKSILGELQREELRFVQTLERGEKLLDELLDEALSSAGNNGGKPCLSGKDVFLLYDTYGFPVEITAEIAGERGVIVDMKGFDMEMENQRKQSQAAHNVVKLSVGNETEIVKSIPDTEFLGYDSLSATAVVKGLLVNGNSVNVVSEGSDVEIFLDRTPFYAESGGQVGDNGFLYVYGEEDAKQKAVIEINDVQKSLGNIFVHKGTIKQGSVEVGKEIDAAVDAKLRQGAKAHHTATHLLQSALKSIIGSETSQAGSLVAFDRLRFDFNFHRPLSEEELMKIESLVNQWVSSATHLETKVMDLQDAKNAGAIAMFGEKYGEQVRVVEVPGVSMELCGGTHVSNTAEIRGFKIISEQGIASGVRRIEAVAGDAFVEYVCARDNYMRCLCSSLKVKAEDVNGRVETILEELRTTRNEVSSLRSKIAVLKAASLANKATTIDNTRVVVENMGDVDADGLKSAAEYLVDTLEDPAAVILGSSPGDGKVSLVAAFSPGVVKMGIQAGKFVGGIAKLCGGGGGGKPNFAQAGGRKPENLPGALEKARDEIVAAISSKSS</sequence>
<feature type="transit peptide" description="Chloroplast and mitochondrion" evidence="1">
    <location>
        <begin position="1"/>
        <end status="unknown"/>
    </location>
</feature>
<feature type="chain" id="PRO_0000402305" description="Alanine--tRNA ligase, chloroplastic/mitochondrial">
    <location>
        <begin status="unknown"/>
        <end position="996"/>
    </location>
</feature>
<feature type="binding site" evidence="1">
    <location>
        <position position="677"/>
    </location>
    <ligand>
        <name>Zn(2+)</name>
        <dbReference type="ChEBI" id="CHEBI:29105"/>
    </ligand>
</feature>
<feature type="binding site" evidence="1">
    <location>
        <position position="681"/>
    </location>
    <ligand>
        <name>Zn(2+)</name>
        <dbReference type="ChEBI" id="CHEBI:29105"/>
    </ligand>
</feature>
<feature type="binding site" evidence="1">
    <location>
        <position position="779"/>
    </location>
    <ligand>
        <name>Zn(2+)</name>
        <dbReference type="ChEBI" id="CHEBI:29105"/>
    </ligand>
</feature>
<feature type="binding site" evidence="1">
    <location>
        <position position="783"/>
    </location>
    <ligand>
        <name>Zn(2+)</name>
        <dbReference type="ChEBI" id="CHEBI:29105"/>
    </ligand>
</feature>